<comment type="function">
    <text evidence="2 5 6">Catalyzes the addition of sialic acid in alpha 2,8-linkage to the sialic acid moiety of the ganglioside GM3 to form ganglioside GD3; gangliosides are a subfamily of complex glycosphingolipds that contain one or more residues of sialic acid (PubMed:17333390, PubMed:18095347). Glycosphingolipids are required for convergence extension movements during early development (PubMed:18095347). Can catalyze the addition of a second alpha-2,8- sialic acid to GD3 to form GT3 (By similarity). Can use GM1b, GD1a and GT1b as acceptor substrates to synthesize GD1c, GT1a and GQ1b respectively (By similarity).</text>
</comment>
<comment type="catalytic activity">
    <reaction evidence="5 6">
        <text>an N-acetyl-alpha-neuraminyl-(2-&gt;3)-beta-D-galactosyl derivative + CMP-N-acetyl-beta-neuraminate = an N-acetyl-alpha-neuraminyl-(2-&gt;8)-N-acetyl-alpha-neuraminyl-(2-&gt;3)-beta-D-galactosyl derivative + CMP + H(+)</text>
        <dbReference type="Rhea" id="RHEA:19313"/>
        <dbReference type="ChEBI" id="CHEBI:15378"/>
        <dbReference type="ChEBI" id="CHEBI:57812"/>
        <dbReference type="ChEBI" id="CHEBI:60377"/>
        <dbReference type="ChEBI" id="CHEBI:140308"/>
        <dbReference type="ChEBI" id="CHEBI:140309"/>
        <dbReference type="EC" id="2.4.3.8"/>
    </reaction>
</comment>
<comment type="catalytic activity">
    <reaction evidence="5 6">
        <text>a ganglioside GM3 (d18:1(4E)) + CMP-N-acetyl-beta-neuraminate = a ganglioside GD3 (d18:1(4E)) + CMP + H(+)</text>
        <dbReference type="Rhea" id="RHEA:41760"/>
        <dbReference type="ChEBI" id="CHEBI:15378"/>
        <dbReference type="ChEBI" id="CHEBI:57812"/>
        <dbReference type="ChEBI" id="CHEBI:60065"/>
        <dbReference type="ChEBI" id="CHEBI:60377"/>
        <dbReference type="ChEBI" id="CHEBI:78436"/>
    </reaction>
    <physiologicalReaction direction="left-to-right" evidence="11">
        <dbReference type="Rhea" id="RHEA:41761"/>
    </physiologicalReaction>
</comment>
<comment type="catalytic activity">
    <reaction evidence="2">
        <text>a ganglioside GD3 (d18:1(4E)) + CMP-N-acetyl-beta-neuraminate = a ganglioside GT3 (d18:1(4E)) + CMP + H(+)</text>
        <dbReference type="Rhea" id="RHEA:41764"/>
        <dbReference type="ChEBI" id="CHEBI:15378"/>
        <dbReference type="ChEBI" id="CHEBI:57812"/>
        <dbReference type="ChEBI" id="CHEBI:60377"/>
        <dbReference type="ChEBI" id="CHEBI:78436"/>
        <dbReference type="ChEBI" id="CHEBI:78438"/>
    </reaction>
    <physiologicalReaction direction="left-to-right" evidence="2">
        <dbReference type="Rhea" id="RHEA:41765"/>
    </physiologicalReaction>
</comment>
<comment type="catalytic activity">
    <reaction evidence="2">
        <text>a ganglioside GD1a (d18:1(4E)) + CMP-N-acetyl-beta-neuraminate = a ganglioside GT1a (d18:1(4E)) + CMP + H(+)</text>
        <dbReference type="Rhea" id="RHEA:41768"/>
        <dbReference type="ChEBI" id="CHEBI:15378"/>
        <dbReference type="ChEBI" id="CHEBI:57812"/>
        <dbReference type="ChEBI" id="CHEBI:60377"/>
        <dbReference type="ChEBI" id="CHEBI:78445"/>
        <dbReference type="ChEBI" id="CHEBI:78447"/>
    </reaction>
    <physiologicalReaction direction="left-to-right" evidence="2">
        <dbReference type="Rhea" id="RHEA:41769"/>
    </physiologicalReaction>
</comment>
<comment type="catalytic activity">
    <reaction evidence="2">
        <text>a ganglioside GT1b (d18:1(4E)) + CMP-N-acetyl-beta-neuraminate = a ganglioside GQ1b (d18:1(4E)) + CMP + H(+)</text>
        <dbReference type="Rhea" id="RHEA:41772"/>
        <dbReference type="ChEBI" id="CHEBI:15378"/>
        <dbReference type="ChEBI" id="CHEBI:57812"/>
        <dbReference type="ChEBI" id="CHEBI:60377"/>
        <dbReference type="ChEBI" id="CHEBI:78452"/>
        <dbReference type="ChEBI" id="CHEBI:78455"/>
    </reaction>
    <physiologicalReaction direction="left-to-right" evidence="2">
        <dbReference type="Rhea" id="RHEA:41773"/>
    </physiologicalReaction>
</comment>
<comment type="catalytic activity">
    <reaction evidence="2">
        <text>a ganglioside GM1b (d18:1(4E)) + CMP-N-acetyl-beta-neuraminate = a ganglioside GD1c (d18:1(4E)) + CMP + H(+)</text>
        <dbReference type="Rhea" id="RHEA:47576"/>
        <dbReference type="ChEBI" id="CHEBI:15378"/>
        <dbReference type="ChEBI" id="CHEBI:57812"/>
        <dbReference type="ChEBI" id="CHEBI:60377"/>
        <dbReference type="ChEBI" id="CHEBI:78568"/>
        <dbReference type="ChEBI" id="CHEBI:87787"/>
    </reaction>
    <physiologicalReaction direction="left-to-right" evidence="2">
        <dbReference type="Rhea" id="RHEA:47577"/>
    </physiologicalReaction>
</comment>
<comment type="catalytic activity">
    <reaction evidence="2">
        <text>a ganglioside GD3 + CMP-N-acetyl-beta-neuraminate = a ganglioside GT3 + CMP + H(+)</text>
        <dbReference type="Rhea" id="RHEA:77295"/>
        <dbReference type="ChEBI" id="CHEBI:15378"/>
        <dbReference type="ChEBI" id="CHEBI:57812"/>
        <dbReference type="ChEBI" id="CHEBI:60377"/>
        <dbReference type="ChEBI" id="CHEBI:79214"/>
        <dbReference type="ChEBI" id="CHEBI:79216"/>
    </reaction>
    <physiologicalReaction direction="left-to-right" evidence="2">
        <dbReference type="Rhea" id="RHEA:77296"/>
    </physiologicalReaction>
</comment>
<comment type="catalytic activity">
    <reaction evidence="2">
        <text>[alpha-N-acetylneuraminyl-(2-&gt;8)](n)-alpha-N-acetylneuraminyl-(2-&gt;8)-alpha-N-acetylneuraminyl-(2-&gt;3)-beta-D-galactosyl-(1-&gt;4)-beta-D-glucosyl-(1&lt;-&gt;1)-ceramide + CMP-N-acetyl-beta-neuraminate = [alpha-N-acetylneuraminyl-(2-&gt;8)](n+1)-alpha-N-acetylneuraminyl-(2-&gt;8)-alpha-N-acetylneuraminyl-(2-&gt;3)-beta-D-galactosyl-(1-&gt;4)-beta-D-glucosyl-(1&lt;-&gt;1)-ceramide + CMP + H(+)</text>
        <dbReference type="Rhea" id="RHEA:77371"/>
        <dbReference type="Rhea" id="RHEA-COMP:18881"/>
        <dbReference type="Rhea" id="RHEA-COMP:18935"/>
        <dbReference type="ChEBI" id="CHEBI:15378"/>
        <dbReference type="ChEBI" id="CHEBI:57812"/>
        <dbReference type="ChEBI" id="CHEBI:60377"/>
        <dbReference type="ChEBI" id="CHEBI:197322"/>
    </reaction>
    <physiologicalReaction direction="left-to-right" evidence="2">
        <dbReference type="Rhea" id="RHEA:77372"/>
    </physiologicalReaction>
</comment>
<comment type="pathway">
    <text evidence="6 10">Protein modification; protein glycosylation.</text>
</comment>
<comment type="pathway">
    <text evidence="6">Lipid metabolism; sphingolipid metabolism.</text>
</comment>
<comment type="subcellular location">
    <subcellularLocation>
        <location evidence="5 6">Golgi apparatus membrane</location>
        <topology evidence="5 6">Single-pass type II membrane protein</topology>
    </subcellularLocation>
    <text evidence="5 6">PubMed:18095347 report localization in the endoplasmic reticulum.</text>
</comment>
<comment type="alternative products">
    <event type="alternative splicing"/>
    <isoform>
        <id>Q6ZXA0-1</id>
        <name evidence="4 5">1</name>
        <name evidence="5">ST8Sia I_long</name>
        <sequence type="displayed"/>
    </isoform>
    <isoform>
        <id>Q6ZXA0-2</id>
        <name evidence="5">2</name>
        <name evidence="5">ST8Sia I_short</name>
        <sequence type="described" ref="VSP_053115"/>
    </isoform>
    <isoform>
        <id>Q6ZXA0-3</id>
        <name evidence="6">3</name>
        <sequence type="described" ref="VSP_053116"/>
    </isoform>
</comment>
<comment type="tissue specificity">
    <text evidence="5 6">Expressed in the dorsal blastopore lip and in the presumptive neuroectoderm in stage 11 embryos. During gastrulation, strongly expressed in the involuting mesoderm. At stages 13 and 16, expressed in the neural plate and neural fold, paraxial mesoderm and notochord. At stages 19 and 22 (neural tube and early tailbud), strongly expressed in the neural tube and notochord. At the tadpole stage, expressed in the head region, branchial arches and otic and optic primordia. Also localized in the notochord and weakly expressed in the somites. In adults, expressed in the brain and ovary. Isoform 2 (short) is expressed at a low level in the adult testis and muscle, and at a high level in the skin. Isoform 1 (long) is expressed at a high level in the adult lung and kidney. Both isoforms 1 and 2 are expressed in the gut and liver.</text>
</comment>
<comment type="developmental stage">
    <text evidence="5 6">Expressed zygotically from the beginning of gastrulation, with expression increasing at stage 12. Expression then persists until stage 35 and declines afterwards.</text>
</comment>
<comment type="similarity">
    <text evidence="3">Belongs to the glycosyltransferase 29 family.</text>
</comment>
<comment type="caution">
    <text evidence="10">PubMed:18095347 report an endoplasmic reticulum localization and a lack of enzymatic activity, which could be a result of impaired N-glycosylation.</text>
</comment>
<organism>
    <name type="scientific">Xenopus laevis</name>
    <name type="common">African clawed frog</name>
    <dbReference type="NCBI Taxonomy" id="8355"/>
    <lineage>
        <taxon>Eukaryota</taxon>
        <taxon>Metazoa</taxon>
        <taxon>Chordata</taxon>
        <taxon>Craniata</taxon>
        <taxon>Vertebrata</taxon>
        <taxon>Euteleostomi</taxon>
        <taxon>Amphibia</taxon>
        <taxon>Batrachia</taxon>
        <taxon>Anura</taxon>
        <taxon>Pipoidea</taxon>
        <taxon>Pipidae</taxon>
        <taxon>Xenopodinae</taxon>
        <taxon>Xenopus</taxon>
        <taxon>Xenopus</taxon>
    </lineage>
</organism>
<gene>
    <name evidence="2" type="primary">st8sia1</name>
    <name evidence="14" type="synonym">siat8a</name>
</gene>
<keyword id="KW-0025">Alternative splicing</keyword>
<keyword id="KW-0217">Developmental protein</keyword>
<keyword id="KW-1015">Disulfide bond</keyword>
<keyword id="KW-0325">Glycoprotein</keyword>
<keyword id="KW-0328">Glycosyltransferase</keyword>
<keyword id="KW-0333">Golgi apparatus</keyword>
<keyword id="KW-0444">Lipid biosynthesis</keyword>
<keyword id="KW-0443">Lipid metabolism</keyword>
<keyword id="KW-0472">Membrane</keyword>
<keyword id="KW-1185">Reference proteome</keyword>
<keyword id="KW-0735">Signal-anchor</keyword>
<keyword id="KW-0746">Sphingolipid metabolism</keyword>
<keyword id="KW-0808">Transferase</keyword>
<keyword id="KW-0812">Transmembrane</keyword>
<keyword id="KW-1133">Transmembrane helix</keyword>
<feature type="chain" id="PRO_0000376859" description="Alpha-N-acetylneuraminide alpha-2,8-sialyltransferase">
    <location>
        <begin position="1"/>
        <end position="359"/>
    </location>
</feature>
<feature type="topological domain" description="Cytoplasmic" evidence="3">
    <location>
        <begin position="1"/>
        <end position="28"/>
    </location>
</feature>
<feature type="transmembrane region" description="Helical; Signal-anchor for type II membrane protein" evidence="3">
    <location>
        <begin position="29"/>
        <end position="49"/>
    </location>
</feature>
<feature type="topological domain" description="Lumenal" evidence="3">
    <location>
        <begin position="50"/>
        <end position="359"/>
    </location>
</feature>
<feature type="active site" description="Proton donor/acceptor" evidence="1">
    <location>
        <position position="324"/>
    </location>
</feature>
<feature type="binding site" evidence="1">
    <location>
        <position position="145"/>
    </location>
    <ligand>
        <name>CMP-N-acetyl-beta-neuraminate</name>
        <dbReference type="ChEBI" id="CHEBI:57812"/>
    </ligand>
</feature>
<feature type="binding site" evidence="1">
    <location>
        <position position="168"/>
    </location>
    <ligand>
        <name>CMP-N-acetyl-beta-neuraminate</name>
        <dbReference type="ChEBI" id="CHEBI:57812"/>
    </ligand>
</feature>
<feature type="binding site" evidence="1">
    <location>
        <position position="276"/>
    </location>
    <ligand>
        <name>CMP-N-acetyl-beta-neuraminate</name>
        <dbReference type="ChEBI" id="CHEBI:57812"/>
    </ligand>
</feature>
<feature type="binding site" evidence="1">
    <location>
        <position position="277"/>
    </location>
    <ligand>
        <name>CMP-N-acetyl-beta-neuraminate</name>
        <dbReference type="ChEBI" id="CHEBI:57812"/>
    </ligand>
</feature>
<feature type="binding site" evidence="1">
    <location>
        <position position="278"/>
    </location>
    <ligand>
        <name>CMP-N-acetyl-beta-neuraminate</name>
        <dbReference type="ChEBI" id="CHEBI:57812"/>
    </ligand>
</feature>
<feature type="binding site" evidence="1">
    <location>
        <position position="298"/>
    </location>
    <ligand>
        <name>CMP-N-acetyl-beta-neuraminate</name>
        <dbReference type="ChEBI" id="CHEBI:57812"/>
    </ligand>
</feature>
<feature type="binding site" evidence="1">
    <location>
        <position position="312"/>
    </location>
    <ligand>
        <name>CMP-N-acetyl-beta-neuraminate</name>
        <dbReference type="ChEBI" id="CHEBI:57812"/>
    </ligand>
</feature>
<feature type="glycosylation site" description="N-linked (GlcNAc...) asparagine" evidence="3">
    <location>
        <position position="73"/>
    </location>
</feature>
<feature type="glycosylation site" description="N-linked (GlcNAc...) asparagine" evidence="3">
    <location>
        <position position="121"/>
    </location>
</feature>
<feature type="glycosylation site" description="N-linked (GlcNAc...) asparagine" evidence="3">
    <location>
        <position position="247"/>
    </location>
</feature>
<feature type="disulfide bond" evidence="1">
    <location>
        <begin position="140"/>
        <end position="289"/>
    </location>
</feature>
<feature type="disulfide bond" evidence="1">
    <location>
        <begin position="154"/>
        <end position="349"/>
    </location>
</feature>
<feature type="splice variant" id="VSP_053115" description="In isoform 2." evidence="8">
    <original>MWGRWRGAGGRRGVAQPVIPQMKLLGGRVPLGASALGLLIVCWFYIFPGGERLPGHKEMIRQVLQFGPRWGRNRSSGDSFRKLLQDCCDPPRLFSMTKANTALGENLWYDGEFFQSLTIDNTTRSLFP</original>
    <variation>MERGGRSERGRTAGDSADEAVGGAGAARCQCPGASHCLLVLHLPRGGATPGTQRNDPAGSTVRPEMGEKPEQRRLL</variation>
    <location>
        <begin position="1"/>
        <end position="128"/>
    </location>
</feature>
<feature type="splice variant" id="VSP_053116" description="In isoform 3." evidence="9">
    <location>
        <begin position="167"/>
        <end position="197"/>
    </location>
</feature>
<feature type="sequence conflict" description="In Ref. 2; AAQ16163." evidence="10" ref="2">
    <original>E</original>
    <variation>Q</variation>
    <location>
        <position position="58"/>
    </location>
</feature>
<feature type="sequence conflict" description="In Ref. 2; AAQ16163." evidence="10" ref="2">
    <original>T</original>
    <variation>S</variation>
    <location>
        <position position="122"/>
    </location>
</feature>
<feature type="sequence conflict" description="In Ref. 2; AAQ16162." evidence="10" ref="2">
    <original>T</original>
    <variation>S</variation>
    <location>
        <position position="246"/>
    </location>
</feature>
<feature type="sequence conflict" description="In Ref. 2; AAQ16163." evidence="10" ref="2">
    <original>F</original>
    <variation>L</variation>
    <location>
        <position position="264"/>
    </location>
</feature>
<name>SIA8A_XENLA</name>
<sequence>MWGRWRGAGGRRGVAQPVIPQMKLLGGRVPLGASALGLLIVCWFYIFPGGERLPGHKEMIRQVLQFGPRWGRNRSSGDSFRKLLQDCCDPPRLFSMTKANTALGENLWYDGEFFQSLTIDNTTRSLFPQDTPIKLPLKRCSVVGNGGILKNSRCGEQIDEADFVMRCNLPPLSREYTDDVGTKTQLVTVNPSIIDKRFQNLLWSRKSFVESVSVYKQSYVYMPAFSTKRGTDPSLRVYYTLEDFGTNQTVLFANPNFLRNVGKFWKSKGVHSKRLSTGLFMVSAALSLCEEVTIYGFWPFQMDLGGRHISHHYYDNMLPLSGVHAMPEEFLQLWHLHKSGVLQMQLDQCKKDVSSKKPH</sequence>
<protein>
    <recommendedName>
        <fullName evidence="2">Alpha-N-acetylneuraminide alpha-2,8-sialyltransferase</fullName>
        <ecNumber evidence="5 6">2.4.3.8</ecNumber>
    </recommendedName>
    <alternativeName>
        <fullName evidence="7">Alpha-2,8-sialyltransferase 8A</fullName>
    </alternativeName>
    <alternativeName>
        <fullName evidence="9">Ganglioside GD3 synthase</fullName>
        <shortName>XlGD3 synthase</shortName>
    </alternativeName>
    <alternativeName>
        <fullName>Sialyltransferase 8A</fullName>
        <shortName>SIAT8-A</shortName>
    </alternativeName>
    <alternativeName>
        <fullName>Sialyltransferase St8Sia I</fullName>
        <shortName>ST8SiaI</shortName>
    </alternativeName>
</protein>
<reference evidence="10 14" key="1">
    <citation type="journal article" date="2005" name="Glycobiology">
        <title>The animal sialyltransferases and sialyltransferase-related genes: a phylogenetic approach.</title>
        <authorList>
            <person name="Harduin-Lepers A."/>
            <person name="Mollicone R."/>
            <person name="Delannoy P."/>
            <person name="Oriol R."/>
        </authorList>
    </citation>
    <scope>NUCLEOTIDE SEQUENCE [MRNA] (ISOFORM 1)</scope>
</reference>
<reference evidence="10 12" key="2">
    <citation type="journal article" date="2007" name="Mol. Cell. Biochem.">
        <title>Molecular cloning and expression of alpha2,8-sialyltransferase (ST8Sia I, GD3 Synthase) in Xenopus.</title>
        <authorList>
            <person name="Rimoldi S."/>
            <person name="Papis E."/>
            <person name="Bernardini G."/>
            <person name="Prati M."/>
            <person name="Gornati R."/>
        </authorList>
    </citation>
    <scope>NUCLEOTIDE SEQUENCE [MRNA] (ISOFORM 2)</scope>
    <scope>NUCLEOTIDE SEQUENCE [MRNA] OF 19-359 (ISOFORM 1)</scope>
    <scope>FUNCTION</scope>
    <scope>CATALYTIC ACTIVITY</scope>
    <scope>SUBCELLULAR LOCATION</scope>
    <scope>TISSUE SPECIFICITY</scope>
    <scope>DEVELOPMENTAL STAGE</scope>
</reference>
<reference evidence="10 13" key="3">
    <citation type="journal article" date="2008" name="Dev. Dyn.">
        <title>Cloning and functional characterization of two key enzymes of glycosphingolipid biosynthesis in the amphibian Xenopus laevis.</title>
        <authorList>
            <person name="Luque M.E."/>
            <person name="Crespo P.M."/>
            <person name="Monaco M.E."/>
            <person name="Aybar M.J."/>
            <person name="Daniotti J.L."/>
            <person name="Sanchez S.S."/>
        </authorList>
    </citation>
    <scope>NUCLEOTIDE SEQUENCE [MRNA] (ISOFORM 3)</scope>
    <scope>FUNCTION</scope>
    <scope>PATHWAY</scope>
    <scope>SUBCELLULAR LOCATION</scope>
    <scope>TISSUE SPECIFICITY</scope>
    <scope>DEVELOPMENTAL STAGE</scope>
</reference>
<proteinExistence type="evidence at protein level"/>
<dbReference type="EC" id="2.4.3.8" evidence="5 6"/>
<dbReference type="EMBL" id="AJ704562">
    <property type="protein sequence ID" value="CAG28695.1"/>
    <property type="molecule type" value="mRNA"/>
</dbReference>
<dbReference type="EMBL" id="AY272056">
    <property type="protein sequence ID" value="AAQ16162.1"/>
    <property type="molecule type" value="mRNA"/>
</dbReference>
<dbReference type="EMBL" id="AY272057">
    <property type="protein sequence ID" value="AAQ16163.1"/>
    <property type="molecule type" value="mRNA"/>
</dbReference>
<dbReference type="EMBL" id="EF067919">
    <property type="protein sequence ID" value="ABK58605.1"/>
    <property type="molecule type" value="mRNA"/>
</dbReference>
<dbReference type="RefSeq" id="NP_001083088.1">
    <molecule id="Q6ZXA0-1"/>
    <property type="nucleotide sequence ID" value="NM_001089619.1"/>
</dbReference>
<dbReference type="SMR" id="Q6ZXA0"/>
<dbReference type="CAZy" id="GT29">
    <property type="family name" value="Glycosyltransferase Family 29"/>
</dbReference>
<dbReference type="GlyCosmos" id="Q6ZXA0">
    <property type="glycosylation" value="3 sites, No reported glycans"/>
</dbReference>
<dbReference type="GeneID" id="398735"/>
<dbReference type="KEGG" id="xla:398735"/>
<dbReference type="AGR" id="Xenbase:XB-GENE-5824746"/>
<dbReference type="CTD" id="398735"/>
<dbReference type="Xenbase" id="XB-GENE-5824746">
    <property type="gene designation" value="st8sia1.L"/>
</dbReference>
<dbReference type="OrthoDB" id="10264956at2759"/>
<dbReference type="BRENDA" id="2.4.99.8">
    <property type="organism ID" value="6725"/>
</dbReference>
<dbReference type="UniPathway" id="UPA00222"/>
<dbReference type="UniPathway" id="UPA00378"/>
<dbReference type="Proteomes" id="UP000186698">
    <property type="component" value="Chromosome 3L"/>
</dbReference>
<dbReference type="Bgee" id="398735">
    <property type="expression patterns" value="Expressed in brain and 18 other cell types or tissues"/>
</dbReference>
<dbReference type="GO" id="GO:0005783">
    <property type="term" value="C:endoplasmic reticulum"/>
    <property type="evidence" value="ECO:0000314"/>
    <property type="project" value="UniProtKB"/>
</dbReference>
<dbReference type="GO" id="GO:0005794">
    <property type="term" value="C:Golgi apparatus"/>
    <property type="evidence" value="ECO:0000314"/>
    <property type="project" value="UniProtKB"/>
</dbReference>
<dbReference type="GO" id="GO:0000139">
    <property type="term" value="C:Golgi membrane"/>
    <property type="evidence" value="ECO:0000314"/>
    <property type="project" value="UniProtKB"/>
</dbReference>
<dbReference type="GO" id="GO:0003828">
    <property type="term" value="F:alpha-N-acetylneuraminate alpha-2,8-sialyltransferase activity"/>
    <property type="evidence" value="ECO:0000314"/>
    <property type="project" value="UniProtKB"/>
</dbReference>
<dbReference type="GO" id="GO:0001574">
    <property type="term" value="P:ganglioside biosynthetic process"/>
    <property type="evidence" value="ECO:0000314"/>
    <property type="project" value="UniProtKB"/>
</dbReference>
<dbReference type="GO" id="GO:0006688">
    <property type="term" value="P:glycosphingolipid biosynthetic process"/>
    <property type="evidence" value="ECO:0000314"/>
    <property type="project" value="UniProtKB"/>
</dbReference>
<dbReference type="GO" id="GO:0006491">
    <property type="term" value="P:N-glycan processing"/>
    <property type="evidence" value="ECO:0000318"/>
    <property type="project" value="GO_Central"/>
</dbReference>
<dbReference type="GO" id="GO:0009311">
    <property type="term" value="P:oligosaccharide metabolic process"/>
    <property type="evidence" value="ECO:0000318"/>
    <property type="project" value="GO_Central"/>
</dbReference>
<dbReference type="GO" id="GO:0006486">
    <property type="term" value="P:protein glycosylation"/>
    <property type="evidence" value="ECO:0000318"/>
    <property type="project" value="GO_Central"/>
</dbReference>
<dbReference type="CDD" id="cd23989">
    <property type="entry name" value="GT29_ST8SIA1"/>
    <property type="match status" value="1"/>
</dbReference>
<dbReference type="FunFam" id="3.90.1480.20:FF:000014">
    <property type="entry name" value="Alpha-N-acetylneuraminide alpha-2,8-sialyltransferase"/>
    <property type="match status" value="1"/>
</dbReference>
<dbReference type="Gene3D" id="3.90.1480.20">
    <property type="entry name" value="Glycosyl transferase family 29"/>
    <property type="match status" value="1"/>
</dbReference>
<dbReference type="InterPro" id="IPR001675">
    <property type="entry name" value="Glyco_trans_29"/>
</dbReference>
<dbReference type="InterPro" id="IPR050943">
    <property type="entry name" value="Glycosyltr_29_Sialyltrsf"/>
</dbReference>
<dbReference type="InterPro" id="IPR038578">
    <property type="entry name" value="GT29-like_sf"/>
</dbReference>
<dbReference type="InterPro" id="IPR012163">
    <property type="entry name" value="Sialyl_trans"/>
</dbReference>
<dbReference type="PANTHER" id="PTHR11987">
    <property type="entry name" value="ALPHA-2,8-SIALYLTRANSFERASE"/>
    <property type="match status" value="1"/>
</dbReference>
<dbReference type="PANTHER" id="PTHR11987:SF3">
    <property type="entry name" value="ALPHA-N-ACETYLNEURAMINIDE ALPHA-2,8-SIALYLTRANSFERASE"/>
    <property type="match status" value="1"/>
</dbReference>
<dbReference type="Pfam" id="PF00777">
    <property type="entry name" value="Glyco_transf_29"/>
    <property type="match status" value="1"/>
</dbReference>
<dbReference type="PIRSF" id="PIRSF005557">
    <property type="entry name" value="Sialyl_trans"/>
    <property type="match status" value="1"/>
</dbReference>
<accession>Q6ZXA0</accession>
<accession>A0T095</accession>
<accession>Q6WRU1</accession>
<accession>Q6WRU2</accession>
<evidence type="ECO:0000250" key="1">
    <source>
        <dbReference type="UniProtKB" id="O43173"/>
    </source>
</evidence>
<evidence type="ECO:0000250" key="2">
    <source>
        <dbReference type="UniProtKB" id="Q92185"/>
    </source>
</evidence>
<evidence type="ECO:0000255" key="3"/>
<evidence type="ECO:0000269" key="4">
    <source>
    </source>
</evidence>
<evidence type="ECO:0000269" key="5">
    <source>
    </source>
</evidence>
<evidence type="ECO:0000269" key="6">
    <source>
    </source>
</evidence>
<evidence type="ECO:0000303" key="7">
    <source>
    </source>
</evidence>
<evidence type="ECO:0000303" key="8">
    <source>
    </source>
</evidence>
<evidence type="ECO:0000303" key="9">
    <source>
    </source>
</evidence>
<evidence type="ECO:0000305" key="10"/>
<evidence type="ECO:0000305" key="11">
    <source>
    </source>
</evidence>
<evidence type="ECO:0000312" key="12">
    <source>
        <dbReference type="EMBL" id="AAQ16163.1"/>
    </source>
</evidence>
<evidence type="ECO:0000312" key="13">
    <source>
        <dbReference type="EMBL" id="ABK58605.1"/>
    </source>
</evidence>
<evidence type="ECO:0000312" key="14">
    <source>
        <dbReference type="EMBL" id="CAG28695.1"/>
    </source>
</evidence>